<proteinExistence type="inferred from homology"/>
<protein>
    <recommendedName>
        <fullName>Mitochondrial import receptor subunit tom20</fullName>
    </recommendedName>
    <alternativeName>
        <fullName>Mitochondrial 20 kDa outer membrane protein</fullName>
    </alternativeName>
    <alternativeName>
        <fullName>Protein mom19</fullName>
    </alternativeName>
    <alternativeName>
        <fullName>Translocase of outer membrane 20 kDa subunit</fullName>
    </alternativeName>
</protein>
<gene>
    <name type="primary">tom20</name>
    <name type="synonym">mom19</name>
    <name type="ORF">NCU06632</name>
</gene>
<name>TOM20_NEUCR</name>
<evidence type="ECO:0000255" key="1"/>
<evidence type="ECO:0000269" key="2">
    <source>
    </source>
</evidence>
<evidence type="ECO:0000305" key="3"/>
<feature type="chain" id="PRO_0000051548" description="Mitochondrial import receptor subunit tom20">
    <location>
        <begin position="1"/>
        <end position="181"/>
    </location>
</feature>
<feature type="topological domain" description="Mitochondrial intermembrane" evidence="1">
    <location>
        <begin position="1"/>
        <end position="5"/>
    </location>
</feature>
<feature type="transmembrane region" description="Helical" evidence="1">
    <location>
        <begin position="6"/>
        <end position="27"/>
    </location>
</feature>
<feature type="topological domain" description="Cytoplasmic" evidence="1">
    <location>
        <begin position="28"/>
        <end position="181"/>
    </location>
</feature>
<sequence length="181" mass="20229">MPSQAVTYTTAAVAAVATGFLAYAVYFDYKRRNDPEFRRQLRRSARRQARQEKEYAELSQQAQRQRIRQMVDEAKEEGFPTTSDEKEAYFLEQVQAGEILGQDPTKAIDASLAFYKALKVYPTPGDLISIYDKTVAKPILDILAEMIAYDPSLKIGTNYTGGVDVAELMREMASAPGVGLD</sequence>
<keyword id="KW-0472">Membrane</keyword>
<keyword id="KW-0496">Mitochondrion</keyword>
<keyword id="KW-1000">Mitochondrion outer membrane</keyword>
<keyword id="KW-0653">Protein transport</keyword>
<keyword id="KW-1185">Reference proteome</keyword>
<keyword id="KW-0812">Transmembrane</keyword>
<keyword id="KW-1133">Transmembrane helix</keyword>
<keyword id="KW-0813">Transport</keyword>
<dbReference type="EMBL" id="M80528">
    <property type="protein sequence ID" value="AAA33596.1"/>
    <property type="molecule type" value="Genomic_DNA"/>
</dbReference>
<dbReference type="EMBL" id="CM002239">
    <property type="protein sequence ID" value="EAA32584.1"/>
    <property type="molecule type" value="Genomic_DNA"/>
</dbReference>
<dbReference type="RefSeq" id="XP_961820.1">
    <property type="nucleotide sequence ID" value="XM_956727.2"/>
</dbReference>
<dbReference type="SMR" id="P35848"/>
<dbReference type="FunCoup" id="P35848">
    <property type="interactions" value="313"/>
</dbReference>
<dbReference type="STRING" id="367110.P35848"/>
<dbReference type="PaxDb" id="5141-EFNCRP00000006321"/>
<dbReference type="EnsemblFungi" id="EAA32584">
    <property type="protein sequence ID" value="EAA32584"/>
    <property type="gene ID" value="NCU06632"/>
</dbReference>
<dbReference type="GeneID" id="3877968"/>
<dbReference type="KEGG" id="ncr:NCU06632"/>
<dbReference type="VEuPathDB" id="FungiDB:NCU06632"/>
<dbReference type="HOGENOM" id="CLU_090411_2_0_1"/>
<dbReference type="InParanoid" id="P35848"/>
<dbReference type="OMA" id="PPPIFQI"/>
<dbReference type="OrthoDB" id="2154253at2759"/>
<dbReference type="Proteomes" id="UP000001805">
    <property type="component" value="Chromosome 4, Linkage Group IV"/>
</dbReference>
<dbReference type="GO" id="GO:0005742">
    <property type="term" value="C:mitochondrial outer membrane translocase complex"/>
    <property type="evidence" value="ECO:0000318"/>
    <property type="project" value="GO_Central"/>
</dbReference>
<dbReference type="GO" id="GO:0030943">
    <property type="term" value="F:mitochondrion targeting sequence binding"/>
    <property type="evidence" value="ECO:0000318"/>
    <property type="project" value="GO_Central"/>
</dbReference>
<dbReference type="GO" id="GO:0006886">
    <property type="term" value="P:intracellular protein transport"/>
    <property type="evidence" value="ECO:0007669"/>
    <property type="project" value="InterPro"/>
</dbReference>
<dbReference type="GO" id="GO:0030150">
    <property type="term" value="P:protein import into mitochondrial matrix"/>
    <property type="evidence" value="ECO:0000318"/>
    <property type="project" value="GO_Central"/>
</dbReference>
<dbReference type="GO" id="GO:0016031">
    <property type="term" value="P:tRNA import into mitochondrion"/>
    <property type="evidence" value="ECO:0000318"/>
    <property type="project" value="GO_Central"/>
</dbReference>
<dbReference type="FunFam" id="1.20.960.10:FF:000002">
    <property type="entry name" value="Mitochondrial import receptor subunit TOM20"/>
    <property type="match status" value="1"/>
</dbReference>
<dbReference type="Gene3D" id="1.20.960.10">
    <property type="entry name" value="Mitochondrial outer membrane translocase complex, subunit Tom20 domain"/>
    <property type="match status" value="1"/>
</dbReference>
<dbReference type="InterPro" id="IPR002056">
    <property type="entry name" value="MAS20"/>
</dbReference>
<dbReference type="InterPro" id="IPR023392">
    <property type="entry name" value="Tom20_dom_sf"/>
</dbReference>
<dbReference type="NCBIfam" id="TIGR00985">
    <property type="entry name" value="3a0801s04tom"/>
    <property type="match status" value="1"/>
</dbReference>
<dbReference type="PANTHER" id="PTHR12430">
    <property type="entry name" value="MITOCHONDRIAL IMPORT RECEPTOR SUBUNIT TOM20"/>
    <property type="match status" value="1"/>
</dbReference>
<dbReference type="PANTHER" id="PTHR12430:SF0">
    <property type="entry name" value="TRANSLOCASE OF OUTER MITOCHONDRIAL MEMBRANE 20"/>
    <property type="match status" value="1"/>
</dbReference>
<dbReference type="Pfam" id="PF02064">
    <property type="entry name" value="MAS20"/>
    <property type="match status" value="1"/>
</dbReference>
<dbReference type="PIRSF" id="PIRSF037707">
    <property type="entry name" value="MAS20_rcpt"/>
    <property type="match status" value="1"/>
</dbReference>
<dbReference type="PRINTS" id="PR00351">
    <property type="entry name" value="OM20RECEPTOR"/>
</dbReference>
<dbReference type="SUPFAM" id="SSF47157">
    <property type="entry name" value="Mitochondrial import receptor subunit Tom20"/>
    <property type="match status" value="1"/>
</dbReference>
<organism>
    <name type="scientific">Neurospora crassa (strain ATCC 24698 / 74-OR23-1A / CBS 708.71 / DSM 1257 / FGSC 987)</name>
    <dbReference type="NCBI Taxonomy" id="367110"/>
    <lineage>
        <taxon>Eukaryota</taxon>
        <taxon>Fungi</taxon>
        <taxon>Dikarya</taxon>
        <taxon>Ascomycota</taxon>
        <taxon>Pezizomycotina</taxon>
        <taxon>Sordariomycetes</taxon>
        <taxon>Sordariomycetidae</taxon>
        <taxon>Sordariales</taxon>
        <taxon>Sordariaceae</taxon>
        <taxon>Neurospora</taxon>
    </lineage>
</organism>
<comment type="function">
    <text evidence="2">Central component of the receptor complex responsible for the recognition and translocation of cytosolically synthesized mitochondrial preproteins. Together with tom22 functions as the transit peptide receptor at the surface of the mitochondrion outer membrane and facilitates the movement of preproteins into the translocation pore.</text>
</comment>
<comment type="subunit">
    <text>Forms part of the preprotein translocase complex of the outer mitochondrial membrane (TOM complex) which consists of at least 8 different proteins (tom5, tom6, tom7, tom20, tom22, tom37, tom40 and tom70).</text>
</comment>
<comment type="subcellular location">
    <subcellularLocation>
        <location evidence="3">Mitochondrion outer membrane</location>
        <topology evidence="3">Single-pass membrane protein</topology>
    </subcellularLocation>
</comment>
<comment type="similarity">
    <text evidence="3">Belongs to the Tom20 family.</text>
</comment>
<accession>P35848</accession>
<accession>Q7RVE7</accession>
<reference key="1">
    <citation type="journal article" date="1991" name="Science">
        <title>Targeting of the master receptor MOM19 to mitochondria.</title>
        <authorList>
            <person name="Schneider H."/>
            <person name="Soellner T."/>
            <person name="Dietmeier N."/>
            <person name="Eckerskorn C."/>
            <person name="Lottspeich F."/>
            <person name="Trueisch B."/>
            <person name="Neupert W."/>
            <person name="Pfanner K."/>
        </authorList>
    </citation>
    <scope>NUCLEOTIDE SEQUENCE [GENOMIC DNA]</scope>
</reference>
<reference key="2">
    <citation type="journal article" date="2003" name="Nature">
        <title>The genome sequence of the filamentous fungus Neurospora crassa.</title>
        <authorList>
            <person name="Galagan J.E."/>
            <person name="Calvo S.E."/>
            <person name="Borkovich K.A."/>
            <person name="Selker E.U."/>
            <person name="Read N.D."/>
            <person name="Jaffe D.B."/>
            <person name="FitzHugh W."/>
            <person name="Ma L.-J."/>
            <person name="Smirnov S."/>
            <person name="Purcell S."/>
            <person name="Rehman B."/>
            <person name="Elkins T."/>
            <person name="Engels R."/>
            <person name="Wang S."/>
            <person name="Nielsen C.B."/>
            <person name="Butler J."/>
            <person name="Endrizzi M."/>
            <person name="Qui D."/>
            <person name="Ianakiev P."/>
            <person name="Bell-Pedersen D."/>
            <person name="Nelson M.A."/>
            <person name="Werner-Washburne M."/>
            <person name="Selitrennikoff C.P."/>
            <person name="Kinsey J.A."/>
            <person name="Braun E.L."/>
            <person name="Zelter A."/>
            <person name="Schulte U."/>
            <person name="Kothe G.O."/>
            <person name="Jedd G."/>
            <person name="Mewes H.-W."/>
            <person name="Staben C."/>
            <person name="Marcotte E."/>
            <person name="Greenberg D."/>
            <person name="Roy A."/>
            <person name="Foley K."/>
            <person name="Naylor J."/>
            <person name="Stange-Thomann N."/>
            <person name="Barrett R."/>
            <person name="Gnerre S."/>
            <person name="Kamal M."/>
            <person name="Kamvysselis M."/>
            <person name="Mauceli E.W."/>
            <person name="Bielke C."/>
            <person name="Rudd S."/>
            <person name="Frishman D."/>
            <person name="Krystofova S."/>
            <person name="Rasmussen C."/>
            <person name="Metzenberg R.L."/>
            <person name="Perkins D.D."/>
            <person name="Kroken S."/>
            <person name="Cogoni C."/>
            <person name="Macino G."/>
            <person name="Catcheside D.E.A."/>
            <person name="Li W."/>
            <person name="Pratt R.J."/>
            <person name="Osmani S.A."/>
            <person name="DeSouza C.P.C."/>
            <person name="Glass N.L."/>
            <person name="Orbach M.J."/>
            <person name="Berglund J.A."/>
            <person name="Voelker R."/>
            <person name="Yarden O."/>
            <person name="Plamann M."/>
            <person name="Seiler S."/>
            <person name="Dunlap J.C."/>
            <person name="Radford A."/>
            <person name="Aramayo R."/>
            <person name="Natvig D.O."/>
            <person name="Alex L.A."/>
            <person name="Mannhaupt G."/>
            <person name="Ebbole D.J."/>
            <person name="Freitag M."/>
            <person name="Paulsen I."/>
            <person name="Sachs M.S."/>
            <person name="Lander E.S."/>
            <person name="Nusbaum C."/>
            <person name="Birren B.W."/>
        </authorList>
    </citation>
    <scope>NUCLEOTIDE SEQUENCE [LARGE SCALE GENOMIC DNA]</scope>
    <source>
        <strain>ATCC 24698 / 74-OR23-1A / CBS 708.71 / DSM 1257 / FGSC 987</strain>
    </source>
</reference>
<reference key="3">
    <citation type="journal article" date="1995" name="EMBO J.">
        <title>MOM22 is a receptor for mitochondrial targeting sequences and cooperates with MOM19.</title>
        <authorList>
            <person name="Mayer A."/>
            <person name="Nargans F.E."/>
            <person name="Neupert W."/>
            <person name="Lill R."/>
        </authorList>
    </citation>
    <scope>FUNCTION</scope>
</reference>